<accession>Q93YF5</accession>
<evidence type="ECO:0000250" key="1"/>
<evidence type="ECO:0000255" key="2">
    <source>
        <dbReference type="PROSITE-ProRule" id="PRU00155"/>
    </source>
</evidence>
<evidence type="ECO:0000255" key="3">
    <source>
        <dbReference type="PROSITE-ProRule" id="PRU00157"/>
    </source>
</evidence>
<evidence type="ECO:0000255" key="4">
    <source>
        <dbReference type="PROSITE-ProRule" id="PRU00190"/>
    </source>
</evidence>
<evidence type="ECO:0000255" key="5">
    <source>
        <dbReference type="PROSITE-ProRule" id="PRU00358"/>
    </source>
</evidence>
<evidence type="ECO:0000255" key="6">
    <source>
        <dbReference type="PROSITE-ProRule" id="PRU00908"/>
    </source>
</evidence>
<evidence type="ECO:0000256" key="7">
    <source>
        <dbReference type="SAM" id="MobiDB-lite"/>
    </source>
</evidence>
<evidence type="ECO:0000269" key="8">
    <source>
    </source>
</evidence>
<evidence type="ECO:0000269" key="9">
    <source>
    </source>
</evidence>
<evidence type="ECO:0000269" key="10">
    <source>
    </source>
</evidence>
<evidence type="ECO:0000305" key="11"/>
<evidence type="ECO:0000305" key="12">
    <source>
    </source>
</evidence>
<evidence type="ECO:0000305" key="13">
    <source>
    </source>
</evidence>
<feature type="chain" id="PRO_0000281048" description="Histone-lysine N-methyltransferase, H3 lysine-9 specific SUVH1">
    <location>
        <begin position="1"/>
        <end position="704"/>
    </location>
</feature>
<feature type="domain" description="YDG" evidence="5">
    <location>
        <begin position="265"/>
        <end position="412"/>
    </location>
</feature>
<feature type="domain" description="Pre-SET" evidence="3">
    <location>
        <begin position="487"/>
        <end position="548"/>
    </location>
</feature>
<feature type="domain" description="SET" evidence="4">
    <location>
        <begin position="551"/>
        <end position="681"/>
    </location>
</feature>
<feature type="domain" description="Post-SET" evidence="2">
    <location>
        <begin position="688"/>
        <end position="704"/>
    </location>
</feature>
<feature type="region of interest" description="Disordered" evidence="7">
    <location>
        <begin position="1"/>
        <end position="21"/>
    </location>
</feature>
<feature type="region of interest" description="Disordered" evidence="7">
    <location>
        <begin position="68"/>
        <end position="176"/>
    </location>
</feature>
<feature type="compositionally biased region" description="Polar residues" evidence="7">
    <location>
        <begin position="80"/>
        <end position="90"/>
    </location>
</feature>
<feature type="compositionally biased region" description="Polar residues" evidence="7">
    <location>
        <begin position="109"/>
        <end position="121"/>
    </location>
</feature>
<feature type="compositionally biased region" description="Basic residues" evidence="7">
    <location>
        <begin position="159"/>
        <end position="170"/>
    </location>
</feature>
<feature type="binding site" evidence="1">
    <location>
        <position position="489"/>
    </location>
    <ligand>
        <name>Zn(2+)</name>
        <dbReference type="ChEBI" id="CHEBI:29105"/>
        <label>1</label>
    </ligand>
</feature>
<feature type="binding site" evidence="1">
    <location>
        <position position="489"/>
    </location>
    <ligand>
        <name>Zn(2+)</name>
        <dbReference type="ChEBI" id="CHEBI:29105"/>
        <label>2</label>
    </ligand>
</feature>
<feature type="binding site" evidence="1">
    <location>
        <position position="491"/>
    </location>
    <ligand>
        <name>Zn(2+)</name>
        <dbReference type="ChEBI" id="CHEBI:29105"/>
        <label>1</label>
    </ligand>
</feature>
<feature type="binding site" evidence="1">
    <location>
        <position position="495"/>
    </location>
    <ligand>
        <name>Zn(2+)</name>
        <dbReference type="ChEBI" id="CHEBI:29105"/>
        <label>1</label>
    </ligand>
</feature>
<feature type="binding site" evidence="1">
    <location>
        <position position="495"/>
    </location>
    <ligand>
        <name>Zn(2+)</name>
        <dbReference type="ChEBI" id="CHEBI:29105"/>
        <label>3</label>
    </ligand>
</feature>
<feature type="binding site" evidence="1">
    <location>
        <position position="502"/>
    </location>
    <ligand>
        <name>Zn(2+)</name>
        <dbReference type="ChEBI" id="CHEBI:29105"/>
        <label>1</label>
    </ligand>
</feature>
<feature type="binding site" evidence="1">
    <location>
        <position position="504"/>
    </location>
    <ligand>
        <name>Zn(2+)</name>
        <dbReference type="ChEBI" id="CHEBI:29105"/>
        <label>2</label>
    </ligand>
</feature>
<feature type="binding site" evidence="1">
    <location>
        <position position="530"/>
    </location>
    <ligand>
        <name>Zn(2+)</name>
        <dbReference type="ChEBI" id="CHEBI:29105"/>
        <label>2</label>
    </ligand>
</feature>
<feature type="binding site" evidence="1">
    <location>
        <position position="530"/>
    </location>
    <ligand>
        <name>Zn(2+)</name>
        <dbReference type="ChEBI" id="CHEBI:29105"/>
        <label>3</label>
    </ligand>
</feature>
<feature type="binding site" evidence="1">
    <location>
        <position position="534"/>
    </location>
    <ligand>
        <name>Zn(2+)</name>
        <dbReference type="ChEBI" id="CHEBI:29105"/>
        <label>2</label>
    </ligand>
</feature>
<feature type="binding site" evidence="1">
    <location>
        <position position="536"/>
    </location>
    <ligand>
        <name>Zn(2+)</name>
        <dbReference type="ChEBI" id="CHEBI:29105"/>
        <label>3</label>
    </ligand>
</feature>
<feature type="binding site" evidence="1">
    <location>
        <position position="540"/>
    </location>
    <ligand>
        <name>Zn(2+)</name>
        <dbReference type="ChEBI" id="CHEBI:29105"/>
        <label>3</label>
    </ligand>
</feature>
<feature type="binding site" evidence="1">
    <location>
        <begin position="561"/>
        <end position="563"/>
    </location>
    <ligand>
        <name>S-adenosyl-L-methionine</name>
        <dbReference type="ChEBI" id="CHEBI:59789"/>
    </ligand>
</feature>
<feature type="binding site" evidence="4">
    <location>
        <position position="593"/>
    </location>
    <ligand>
        <name>S-adenosyl-L-methionine</name>
        <dbReference type="ChEBI" id="CHEBI:59789"/>
    </ligand>
</feature>
<feature type="binding site" evidence="4">
    <location>
        <position position="595"/>
    </location>
    <ligand>
        <name>S-adenosyl-L-methionine</name>
        <dbReference type="ChEBI" id="CHEBI:59789"/>
    </ligand>
</feature>
<feature type="binding site" evidence="4">
    <location>
        <position position="635"/>
    </location>
    <ligand>
        <name>S-adenosyl-L-methionine</name>
        <dbReference type="ChEBI" id="CHEBI:59789"/>
    </ligand>
</feature>
<feature type="binding site" evidence="1">
    <location>
        <begin position="638"/>
        <end position="639"/>
    </location>
    <ligand>
        <name>S-adenosyl-L-methionine</name>
        <dbReference type="ChEBI" id="CHEBI:59789"/>
    </ligand>
</feature>
<feature type="binding site" evidence="1">
    <location>
        <position position="641"/>
    </location>
    <ligand>
        <name>Zn(2+)</name>
        <dbReference type="ChEBI" id="CHEBI:29105"/>
        <label>4</label>
    </ligand>
</feature>
<feature type="binding site" evidence="1">
    <location>
        <position position="692"/>
    </location>
    <ligand>
        <name>Zn(2+)</name>
        <dbReference type="ChEBI" id="CHEBI:29105"/>
        <label>4</label>
    </ligand>
</feature>
<feature type="binding site" evidence="1">
    <location>
        <position position="694"/>
    </location>
    <ligand>
        <name>Zn(2+)</name>
        <dbReference type="ChEBI" id="CHEBI:29105"/>
        <label>4</label>
    </ligand>
</feature>
<feature type="binding site" evidence="1">
    <location>
        <position position="699"/>
    </location>
    <ligand>
        <name>Zn(2+)</name>
        <dbReference type="ChEBI" id="CHEBI:29105"/>
        <label>4</label>
    </ligand>
</feature>
<comment type="function">
    <text evidence="9 10">Histone methyltransferase. Methylates in vitro both 'Lys-9' and 'Lys-27' of histone H3. Required for in vivo dimethylation of 'Lys-9'. H3 'Lys-9' methylation represents a specific tag for epigenetic control for plant development and transcriptional repression.</text>
</comment>
<comment type="catalytic activity">
    <reaction evidence="6 12">
        <text>N(6)-methyl-L-lysyl(27)-[histone H3] + S-adenosyl-L-methionine = N(6),N(6)-dimethyl-L-lysyl(27)-[histone H3] + S-adenosyl-L-homocysteine + H(+)</text>
        <dbReference type="Rhea" id="RHEA:60300"/>
        <dbReference type="Rhea" id="RHEA-COMP:15539"/>
        <dbReference type="Rhea" id="RHEA-COMP:15544"/>
        <dbReference type="ChEBI" id="CHEBI:15378"/>
        <dbReference type="ChEBI" id="CHEBI:57856"/>
        <dbReference type="ChEBI" id="CHEBI:59789"/>
        <dbReference type="ChEBI" id="CHEBI:61929"/>
        <dbReference type="ChEBI" id="CHEBI:61976"/>
    </reaction>
</comment>
<comment type="catalytic activity">
    <reaction evidence="6 12 13">
        <text>L-lysyl(9)-[histone H3] + 2 S-adenosyl-L-methionine = N(6),N(6)-dimethyl-L-lysyl(9)-[histone H3] + 2 S-adenosyl-L-homocysteine + 2 H(+)</text>
        <dbReference type="Rhea" id="RHEA:64444"/>
        <dbReference type="Rhea" id="RHEA-COMP:15541"/>
        <dbReference type="Rhea" id="RHEA-COMP:15546"/>
        <dbReference type="ChEBI" id="CHEBI:15378"/>
        <dbReference type="ChEBI" id="CHEBI:29969"/>
        <dbReference type="ChEBI" id="CHEBI:57856"/>
        <dbReference type="ChEBI" id="CHEBI:59789"/>
        <dbReference type="ChEBI" id="CHEBI:61976"/>
        <dbReference type="EC" id="2.1.1.368"/>
    </reaction>
</comment>
<comment type="catalytic activity">
    <reaction evidence="12">
        <text>L-lysyl(27)-[histone H3] + S-adenosyl-L-methionine = N(6)-methyl-L-lysyl(27)-[histone H3] + S-adenosyl-L-homocysteine + H(+)</text>
        <dbReference type="Rhea" id="RHEA:60296"/>
        <dbReference type="Rhea" id="RHEA-COMP:15544"/>
        <dbReference type="Rhea" id="RHEA-COMP:15548"/>
        <dbReference type="ChEBI" id="CHEBI:15378"/>
        <dbReference type="ChEBI" id="CHEBI:29969"/>
        <dbReference type="ChEBI" id="CHEBI:57856"/>
        <dbReference type="ChEBI" id="CHEBI:59789"/>
        <dbReference type="ChEBI" id="CHEBI:61929"/>
        <dbReference type="EC" id="2.1.1.369"/>
    </reaction>
</comment>
<comment type="subunit">
    <text evidence="9">Interacts with LHP1.</text>
</comment>
<comment type="subcellular location">
    <subcellularLocation>
        <location>Nucleus</location>
    </subcellularLocation>
    <subcellularLocation>
        <location evidence="11">Chromosome</location>
    </subcellularLocation>
    <text>Associated with chromatin.</text>
</comment>
<comment type="tissue specificity">
    <text evidence="8">Expressed in roots, stems, leaves and flowers.</text>
</comment>
<comment type="domain">
    <text>The SET domain is required for methyltransferase activity and ectopic effect on plant growth.</text>
</comment>
<comment type="domain">
    <text evidence="1">In the pre-SET domain, Cys residues bind 3 zinc ions that are arranged in a triangular cluster; some of these Cys residues contribute to the binding of two zinc ions within the cluster.</text>
</comment>
<comment type="similarity">
    <text evidence="6">Belongs to the class V-like SAM-binding methyltransferase superfamily. Histone-lysine methyltransferase family. Suvar3-9 subfamily.</text>
</comment>
<protein>
    <recommendedName>
        <fullName>Histone-lysine N-methyltransferase, H3 lysine-9 specific SUVH1</fullName>
        <ecNumber evidence="12">2.1.1.-</ecNumber>
        <ecNumber evidence="12 13">2.1.1.368</ecNumber>
        <ecNumber evidence="12">2.1.1.369</ecNumber>
    </recommendedName>
    <alternativeName>
        <fullName>Histone H3-K9 methyltransferase 1</fullName>
        <shortName>H3-K9-HMTase 1</shortName>
    </alternativeName>
    <alternativeName>
        <fullName>NtSet1</fullName>
    </alternativeName>
    <alternativeName>
        <fullName>Suppressor of variegation 3-9 homolog protein 1</fullName>
        <shortName>Su(var)3-9 homolog protein 1</shortName>
    </alternativeName>
</protein>
<gene>
    <name type="primary">SUVH1</name>
    <name type="synonym">SET1</name>
</gene>
<dbReference type="EC" id="2.1.1.-" evidence="12"/>
<dbReference type="EC" id="2.1.1.368" evidence="12 13"/>
<dbReference type="EC" id="2.1.1.369" evidence="12"/>
<dbReference type="EMBL" id="AJ294474">
    <property type="protein sequence ID" value="CAC67503.1"/>
    <property type="molecule type" value="mRNA"/>
</dbReference>
<dbReference type="RefSeq" id="NP_001311665.1">
    <property type="nucleotide sequence ID" value="NM_001324736.1"/>
</dbReference>
<dbReference type="SMR" id="Q93YF5"/>
<dbReference type="STRING" id="4097.Q93YF5"/>
<dbReference type="PaxDb" id="4097-Q93YF5"/>
<dbReference type="GeneID" id="107761901"/>
<dbReference type="KEGG" id="nta:107761901"/>
<dbReference type="OrthoDB" id="5792673at2759"/>
<dbReference type="PhylomeDB" id="Q93YF5"/>
<dbReference type="BRENDA" id="2.1.1.368">
    <property type="organism ID" value="3645"/>
</dbReference>
<dbReference type="BRENDA" id="2.1.1.371">
    <property type="organism ID" value="3645"/>
</dbReference>
<dbReference type="Proteomes" id="UP000084051">
    <property type="component" value="Unplaced"/>
</dbReference>
<dbReference type="GO" id="GO:0005694">
    <property type="term" value="C:chromosome"/>
    <property type="evidence" value="ECO:0007669"/>
    <property type="project" value="UniProtKB-SubCell"/>
</dbReference>
<dbReference type="GO" id="GO:0005634">
    <property type="term" value="C:nucleus"/>
    <property type="evidence" value="ECO:0007669"/>
    <property type="project" value="UniProtKB-SubCell"/>
</dbReference>
<dbReference type="GO" id="GO:0003690">
    <property type="term" value="F:double-stranded DNA binding"/>
    <property type="evidence" value="ECO:0000318"/>
    <property type="project" value="GO_Central"/>
</dbReference>
<dbReference type="GO" id="GO:0140953">
    <property type="term" value="F:histone H3K27 monomethyltransferase activity"/>
    <property type="evidence" value="ECO:0007669"/>
    <property type="project" value="RHEA"/>
</dbReference>
<dbReference type="GO" id="GO:0140942">
    <property type="term" value="F:histone H3K9 dimethyltransferase activity"/>
    <property type="evidence" value="ECO:0007669"/>
    <property type="project" value="UniProtKB-EC"/>
</dbReference>
<dbReference type="GO" id="GO:0042054">
    <property type="term" value="F:histone methyltransferase activity"/>
    <property type="evidence" value="ECO:0000318"/>
    <property type="project" value="GO_Central"/>
</dbReference>
<dbReference type="GO" id="GO:0008270">
    <property type="term" value="F:zinc ion binding"/>
    <property type="evidence" value="ECO:0007669"/>
    <property type="project" value="InterPro"/>
</dbReference>
<dbReference type="GO" id="GO:0032259">
    <property type="term" value="P:methylation"/>
    <property type="evidence" value="ECO:0007669"/>
    <property type="project" value="UniProtKB-KW"/>
</dbReference>
<dbReference type="FunFam" id="2.30.280.10:FF:000003">
    <property type="entry name" value="Histone-lysine N-methyltransferase, H3 lysine-9 specific SUVH5"/>
    <property type="match status" value="1"/>
</dbReference>
<dbReference type="Gene3D" id="2.170.270.10">
    <property type="entry name" value="SET domain"/>
    <property type="match status" value="1"/>
</dbReference>
<dbReference type="Gene3D" id="2.30.280.10">
    <property type="entry name" value="SRA-YDG"/>
    <property type="match status" value="1"/>
</dbReference>
<dbReference type="InterPro" id="IPR025794">
    <property type="entry name" value="H3-K9-MeTrfase_plant"/>
</dbReference>
<dbReference type="InterPro" id="IPR051357">
    <property type="entry name" value="H3K9_HMTase_SUVAR3-9"/>
</dbReference>
<dbReference type="InterPro" id="IPR003616">
    <property type="entry name" value="Post-SET_dom"/>
</dbReference>
<dbReference type="InterPro" id="IPR007728">
    <property type="entry name" value="Pre-SET_dom"/>
</dbReference>
<dbReference type="InterPro" id="IPR015947">
    <property type="entry name" value="PUA-like_sf"/>
</dbReference>
<dbReference type="InterPro" id="IPR001214">
    <property type="entry name" value="SET_dom"/>
</dbReference>
<dbReference type="InterPro" id="IPR046341">
    <property type="entry name" value="SET_dom_sf"/>
</dbReference>
<dbReference type="InterPro" id="IPR036987">
    <property type="entry name" value="SRA-YDG_sf"/>
</dbReference>
<dbReference type="InterPro" id="IPR003105">
    <property type="entry name" value="SRA_YDG"/>
</dbReference>
<dbReference type="PANTHER" id="PTHR45660">
    <property type="entry name" value="HISTONE-LYSINE N-METHYLTRANSFERASE SETMAR"/>
    <property type="match status" value="1"/>
</dbReference>
<dbReference type="PANTHER" id="PTHR45660:SF13">
    <property type="entry name" value="HISTONE-LYSINE N-METHYLTRANSFERASE SETMAR"/>
    <property type="match status" value="1"/>
</dbReference>
<dbReference type="Pfam" id="PF05033">
    <property type="entry name" value="Pre-SET"/>
    <property type="match status" value="1"/>
</dbReference>
<dbReference type="Pfam" id="PF02182">
    <property type="entry name" value="SAD_SRA"/>
    <property type="match status" value="1"/>
</dbReference>
<dbReference type="Pfam" id="PF00856">
    <property type="entry name" value="SET"/>
    <property type="match status" value="1"/>
</dbReference>
<dbReference type="SMART" id="SM00468">
    <property type="entry name" value="PreSET"/>
    <property type="match status" value="1"/>
</dbReference>
<dbReference type="SMART" id="SM00317">
    <property type="entry name" value="SET"/>
    <property type="match status" value="1"/>
</dbReference>
<dbReference type="SMART" id="SM00466">
    <property type="entry name" value="SRA"/>
    <property type="match status" value="1"/>
</dbReference>
<dbReference type="SUPFAM" id="SSF88697">
    <property type="entry name" value="PUA domain-like"/>
    <property type="match status" value="1"/>
</dbReference>
<dbReference type="SUPFAM" id="SSF82199">
    <property type="entry name" value="SET domain"/>
    <property type="match status" value="1"/>
</dbReference>
<dbReference type="PROSITE" id="PS50868">
    <property type="entry name" value="POST_SET"/>
    <property type="match status" value="1"/>
</dbReference>
<dbReference type="PROSITE" id="PS50867">
    <property type="entry name" value="PRE_SET"/>
    <property type="match status" value="1"/>
</dbReference>
<dbReference type="PROSITE" id="PS51575">
    <property type="entry name" value="SAM_MT43_SUVAR39_2"/>
    <property type="match status" value="1"/>
</dbReference>
<dbReference type="PROSITE" id="PS50280">
    <property type="entry name" value="SET"/>
    <property type="match status" value="1"/>
</dbReference>
<dbReference type="PROSITE" id="PS51015">
    <property type="entry name" value="YDG"/>
    <property type="match status" value="1"/>
</dbReference>
<organism>
    <name type="scientific">Nicotiana tabacum</name>
    <name type="common">Common tobacco</name>
    <dbReference type="NCBI Taxonomy" id="4097"/>
    <lineage>
        <taxon>Eukaryota</taxon>
        <taxon>Viridiplantae</taxon>
        <taxon>Streptophyta</taxon>
        <taxon>Embryophyta</taxon>
        <taxon>Tracheophyta</taxon>
        <taxon>Spermatophyta</taxon>
        <taxon>Magnoliopsida</taxon>
        <taxon>eudicotyledons</taxon>
        <taxon>Gunneridae</taxon>
        <taxon>Pentapetalae</taxon>
        <taxon>asterids</taxon>
        <taxon>lamiids</taxon>
        <taxon>Solanales</taxon>
        <taxon>Solanaceae</taxon>
        <taxon>Nicotianoideae</taxon>
        <taxon>Nicotianeae</taxon>
        <taxon>Nicotiana</taxon>
    </lineage>
</organism>
<name>SUVH1_TOBAC</name>
<reference key="1">
    <citation type="journal article" date="2001" name="Plant J.">
        <title>NtSET1, a member of a newly identified subgroup of plant SET-domain-containing proteins, is chromatin-associated and its ectopic overexpression inhibits tobacco plant growth.</title>
        <authorList>
            <person name="Shen W.-H."/>
        </authorList>
    </citation>
    <scope>NUCLEOTIDE SEQUENCE [MRNA]</scope>
    <scope>TISSUE SPECIFICITY</scope>
    <scope>SUBCELLULAR LOCATION</scope>
</reference>
<reference key="2">
    <citation type="journal article" date="2004" name="Plant J.">
        <title>Molecular characterization of the tobacco SET domain protein NtSET1 unravels its role in histone methylation, chromatin binding, and segregation.</title>
        <authorList>
            <person name="Yu Y."/>
            <person name="Dong A."/>
            <person name="Shen W.-H."/>
        </authorList>
    </citation>
    <scope>FUNCTION</scope>
    <scope>SUBCELLULAR LOCATION</scope>
    <scope>INTERACTION WITH LHP1</scope>
</reference>
<reference key="3">
    <citation type="journal article" date="2004" name="Plant Cell Physiol.">
        <title>Ectopic expression of the NtSET1 histone methyltransferase inhibits cell expansion, and affects cell division and differentiation in tobacco plants.</title>
        <authorList>
            <person name="Shen W.-H."/>
            <person name="Meyer D."/>
        </authorList>
    </citation>
    <scope>FUNCTION</scope>
</reference>
<sequence>MEQGLRSDGNNPPSIDKTRVLDVKPLRCLAPVFPSPNGMSSVSTPQPSPFVCVPPTGPFPPGVAPFYPFVAPNDSGRPGESSQQTPSGVPNQGGPFGFAQPISPVPLNSFRTPTTANGNSGRSRRAVDDDDYSNSQDQNDQFASGFSVHVNNVEDSGTGKKRGRPKKPRRAQQAEGLTPVEVDVEPLLTQLLTSFKLVDLDQVKKADGDKELAGRVLLVFDLFRRRMTQIDESRDGPGSGRRPDLKASNMLMTKGVRTNQTKRIGNAPGIEVGDIFFFRMELCLVGLHAPTMAGIDYMSVKLTMDEEPLAVSIVSSGGYDDDGGDGDVLIYTGQGGVQRKDGQVFDQKLERGNLALEKSVHRANEVRVIRGVKDVAYPTGKIYIYDGLYKIQESWAEKNKVGCNVFKYKLLRVPGQPEAFKVWKSIQQWKDGVASRVGVILPDLTSGAESQPVCLVNDVDDEKGPAYFTYIPSLKYSKPFVMPRPSPSCHCVGGCQPGDSNCACIQSNGGFLPYSSLGVLLSYKTLIHECGSACSCPPNCRNRMSQGGPKARLEVFKTKNRGWGLRSWDPIRGGGFICEYAGEVIDAGNYSDDNYIFDATRIYAPLEAERDYNDESRKVPFPLVISAKNGGNISRFMNHSCSPNVYWQLVVRQSNNEATYHIAFFAIRHIPPMQELTFDYGMDKADHRRKKCLCGSLNCRGYFY</sequence>
<proteinExistence type="evidence at protein level"/>
<keyword id="KW-0156">Chromatin regulator</keyword>
<keyword id="KW-0158">Chromosome</keyword>
<keyword id="KW-0479">Metal-binding</keyword>
<keyword id="KW-0489">Methyltransferase</keyword>
<keyword id="KW-0539">Nucleus</keyword>
<keyword id="KW-1185">Reference proteome</keyword>
<keyword id="KW-0949">S-adenosyl-L-methionine</keyword>
<keyword id="KW-0808">Transferase</keyword>
<keyword id="KW-0862">Zinc</keyword>